<keyword id="KW-0131">Cell cycle</keyword>
<keyword id="KW-0132">Cell division</keyword>
<keyword id="KW-1003">Cell membrane</keyword>
<keyword id="KW-0133">Cell shape</keyword>
<keyword id="KW-0961">Cell wall biogenesis/degradation</keyword>
<keyword id="KW-0328">Glycosyltransferase</keyword>
<keyword id="KW-0472">Membrane</keyword>
<keyword id="KW-0573">Peptidoglycan synthesis</keyword>
<keyword id="KW-0808">Transferase</keyword>
<comment type="function">
    <text evidence="1">Cell wall formation. Catalyzes the transfer of a GlcNAc subunit on undecaprenyl-pyrophosphoryl-MurNAc-pentapeptide (lipid intermediate I) to form undecaprenyl-pyrophosphoryl-MurNAc-(pentapeptide)GlcNAc (lipid intermediate II).</text>
</comment>
<comment type="catalytic activity">
    <reaction evidence="1">
        <text>di-trans,octa-cis-undecaprenyl diphospho-N-acetyl-alpha-D-muramoyl-L-alanyl-D-glutamyl-meso-2,6-diaminopimeloyl-D-alanyl-D-alanine + UDP-N-acetyl-alpha-D-glucosamine = di-trans,octa-cis-undecaprenyl diphospho-[N-acetyl-alpha-D-glucosaminyl-(1-&gt;4)]-N-acetyl-alpha-D-muramoyl-L-alanyl-D-glutamyl-meso-2,6-diaminopimeloyl-D-alanyl-D-alanine + UDP + H(+)</text>
        <dbReference type="Rhea" id="RHEA:31227"/>
        <dbReference type="ChEBI" id="CHEBI:15378"/>
        <dbReference type="ChEBI" id="CHEBI:57705"/>
        <dbReference type="ChEBI" id="CHEBI:58223"/>
        <dbReference type="ChEBI" id="CHEBI:61387"/>
        <dbReference type="ChEBI" id="CHEBI:61388"/>
        <dbReference type="EC" id="2.4.1.227"/>
    </reaction>
</comment>
<comment type="pathway">
    <text evidence="1">Cell wall biogenesis; peptidoglycan biosynthesis.</text>
</comment>
<comment type="subcellular location">
    <subcellularLocation>
        <location evidence="1">Cell membrane</location>
        <topology evidence="1">Peripheral membrane protein</topology>
        <orientation evidence="1">Cytoplasmic side</orientation>
    </subcellularLocation>
</comment>
<comment type="similarity">
    <text evidence="1">Belongs to the glycosyltransferase 28 family. MurG subfamily.</text>
</comment>
<name>MURG_CLOB6</name>
<proteinExistence type="inferred from homology"/>
<dbReference type="EC" id="2.4.1.227" evidence="1"/>
<dbReference type="EMBL" id="CP001083">
    <property type="protein sequence ID" value="ACQ52941.1"/>
    <property type="molecule type" value="Genomic_DNA"/>
</dbReference>
<dbReference type="RefSeq" id="WP_003361280.1">
    <property type="nucleotide sequence ID" value="NC_012658.1"/>
</dbReference>
<dbReference type="SMR" id="C3L230"/>
<dbReference type="CAZy" id="GT28">
    <property type="family name" value="Glycosyltransferase Family 28"/>
</dbReference>
<dbReference type="KEGG" id="cbi:CLJ_B2988"/>
<dbReference type="HOGENOM" id="CLU_037404_0_0_9"/>
<dbReference type="UniPathway" id="UPA00219"/>
<dbReference type="Proteomes" id="UP000002333">
    <property type="component" value="Chromosome"/>
</dbReference>
<dbReference type="GO" id="GO:0005886">
    <property type="term" value="C:plasma membrane"/>
    <property type="evidence" value="ECO:0007669"/>
    <property type="project" value="UniProtKB-SubCell"/>
</dbReference>
<dbReference type="GO" id="GO:0051991">
    <property type="term" value="F:UDP-N-acetyl-D-glucosamine:N-acetylmuramoyl-L-alanyl-D-glutamyl-meso-2,6-diaminopimelyl-D-alanyl-D-alanine-diphosphoundecaprenol 4-beta-N-acetylglucosaminlytransferase activity"/>
    <property type="evidence" value="ECO:0007669"/>
    <property type="project" value="RHEA"/>
</dbReference>
<dbReference type="GO" id="GO:0050511">
    <property type="term" value="F:undecaprenyldiphospho-muramoylpentapeptide beta-N-acetylglucosaminyltransferase activity"/>
    <property type="evidence" value="ECO:0007669"/>
    <property type="project" value="UniProtKB-UniRule"/>
</dbReference>
<dbReference type="GO" id="GO:0005975">
    <property type="term" value="P:carbohydrate metabolic process"/>
    <property type="evidence" value="ECO:0007669"/>
    <property type="project" value="InterPro"/>
</dbReference>
<dbReference type="GO" id="GO:0051301">
    <property type="term" value="P:cell division"/>
    <property type="evidence" value="ECO:0007669"/>
    <property type="project" value="UniProtKB-KW"/>
</dbReference>
<dbReference type="GO" id="GO:0071555">
    <property type="term" value="P:cell wall organization"/>
    <property type="evidence" value="ECO:0007669"/>
    <property type="project" value="UniProtKB-KW"/>
</dbReference>
<dbReference type="GO" id="GO:0030259">
    <property type="term" value="P:lipid glycosylation"/>
    <property type="evidence" value="ECO:0007669"/>
    <property type="project" value="UniProtKB-UniRule"/>
</dbReference>
<dbReference type="GO" id="GO:0009252">
    <property type="term" value="P:peptidoglycan biosynthetic process"/>
    <property type="evidence" value="ECO:0007669"/>
    <property type="project" value="UniProtKB-UniRule"/>
</dbReference>
<dbReference type="GO" id="GO:0008360">
    <property type="term" value="P:regulation of cell shape"/>
    <property type="evidence" value="ECO:0007669"/>
    <property type="project" value="UniProtKB-KW"/>
</dbReference>
<dbReference type="CDD" id="cd03785">
    <property type="entry name" value="GT28_MurG"/>
    <property type="match status" value="1"/>
</dbReference>
<dbReference type="Gene3D" id="3.40.50.2000">
    <property type="entry name" value="Glycogen Phosphorylase B"/>
    <property type="match status" value="2"/>
</dbReference>
<dbReference type="HAMAP" id="MF_00033">
    <property type="entry name" value="MurG"/>
    <property type="match status" value="1"/>
</dbReference>
<dbReference type="InterPro" id="IPR006009">
    <property type="entry name" value="GlcNAc_MurG"/>
</dbReference>
<dbReference type="InterPro" id="IPR007235">
    <property type="entry name" value="Glyco_trans_28_C"/>
</dbReference>
<dbReference type="InterPro" id="IPR004276">
    <property type="entry name" value="GlycoTrans_28_N"/>
</dbReference>
<dbReference type="NCBIfam" id="TIGR01133">
    <property type="entry name" value="murG"/>
    <property type="match status" value="1"/>
</dbReference>
<dbReference type="NCBIfam" id="NF009102">
    <property type="entry name" value="PRK12446.1"/>
    <property type="match status" value="1"/>
</dbReference>
<dbReference type="PANTHER" id="PTHR21015:SF27">
    <property type="entry name" value="UDP-N-ACETYLGLUCOSAMINE--N-ACETYLMURAMYL-(PENTAPEPTIDE) PYROPHOSPHORYL-UNDECAPRENOL N-ACETYLGLUCOSAMINE TRANSFERASE"/>
    <property type="match status" value="1"/>
</dbReference>
<dbReference type="PANTHER" id="PTHR21015">
    <property type="entry name" value="UDP-N-ACETYLGLUCOSAMINE--N-ACETYLMURAMYL-(PENTAPEPTIDE) PYROPHOSPHORYL-UNDECAPRENOL N-ACETYLGLUCOSAMINE TRANSFERASE 1"/>
    <property type="match status" value="1"/>
</dbReference>
<dbReference type="Pfam" id="PF04101">
    <property type="entry name" value="Glyco_tran_28_C"/>
    <property type="match status" value="1"/>
</dbReference>
<dbReference type="Pfam" id="PF03033">
    <property type="entry name" value="Glyco_transf_28"/>
    <property type="match status" value="1"/>
</dbReference>
<dbReference type="SUPFAM" id="SSF53756">
    <property type="entry name" value="UDP-Glycosyltransferase/glycogen phosphorylase"/>
    <property type="match status" value="1"/>
</dbReference>
<accession>C3L230</accession>
<sequence length="354" mass="39499">MKKIIMTGGGTAGHVTPNLALVPELKKLGYEIKYIGSIEGIERKIIEKEGIEYFPISSGKLRRYFDLKNFSDPFKVLKGVFQAKKIIKKEKPDIVFSKGGFVTVPVVIAAHLNKIPVIAHESDITPGLANKLATPYCTRVCVTFPESVKHIKGDKAVLTGTPIRRELLEGNKLEGIKLCGFKDNKPILLIIGGSLGSKIINGIVRKNLDNILSKFNIIHICGKSNLDENLENRKGYAQFEYVNEELPDLMKASDLVISRAGANVIYELLALKKPNLLIPLSKKSSRGDQILNAASFEKSGYSLVLKEEELEDKTLMKKLNHLYENRNVYINNMSKSKMDNGVKNITELIKKYTK</sequence>
<gene>
    <name evidence="1" type="primary">murG</name>
    <name type="ordered locus">CLJ_B2988</name>
</gene>
<organism>
    <name type="scientific">Clostridium botulinum (strain 657 / Type Ba4)</name>
    <dbReference type="NCBI Taxonomy" id="515621"/>
    <lineage>
        <taxon>Bacteria</taxon>
        <taxon>Bacillati</taxon>
        <taxon>Bacillota</taxon>
        <taxon>Clostridia</taxon>
        <taxon>Eubacteriales</taxon>
        <taxon>Clostridiaceae</taxon>
        <taxon>Clostridium</taxon>
    </lineage>
</organism>
<evidence type="ECO:0000255" key="1">
    <source>
        <dbReference type="HAMAP-Rule" id="MF_00033"/>
    </source>
</evidence>
<feature type="chain" id="PRO_1000202015" description="UDP-N-acetylglucosamine--N-acetylmuramyl-(pentapeptide) pyrophosphoryl-undecaprenol N-acetylglucosamine transferase">
    <location>
        <begin position="1"/>
        <end position="354"/>
    </location>
</feature>
<feature type="binding site" evidence="1">
    <location>
        <begin position="11"/>
        <end position="13"/>
    </location>
    <ligand>
        <name>UDP-N-acetyl-alpha-D-glucosamine</name>
        <dbReference type="ChEBI" id="CHEBI:57705"/>
    </ligand>
</feature>
<feature type="binding site" evidence="1">
    <location>
        <position position="164"/>
    </location>
    <ligand>
        <name>UDP-N-acetyl-alpha-D-glucosamine</name>
        <dbReference type="ChEBI" id="CHEBI:57705"/>
    </ligand>
</feature>
<feature type="binding site" evidence="1">
    <location>
        <position position="194"/>
    </location>
    <ligand>
        <name>UDP-N-acetyl-alpha-D-glucosamine</name>
        <dbReference type="ChEBI" id="CHEBI:57705"/>
    </ligand>
</feature>
<feature type="binding site" evidence="1">
    <location>
        <position position="289"/>
    </location>
    <ligand>
        <name>UDP-N-acetyl-alpha-D-glucosamine</name>
        <dbReference type="ChEBI" id="CHEBI:57705"/>
    </ligand>
</feature>
<protein>
    <recommendedName>
        <fullName evidence="1">UDP-N-acetylglucosamine--N-acetylmuramyl-(pentapeptide) pyrophosphoryl-undecaprenol N-acetylglucosamine transferase</fullName>
        <ecNumber evidence="1">2.4.1.227</ecNumber>
    </recommendedName>
    <alternativeName>
        <fullName evidence="1">Undecaprenyl-PP-MurNAc-pentapeptide-UDPGlcNAc GlcNAc transferase</fullName>
    </alternativeName>
</protein>
<reference key="1">
    <citation type="submission" date="2008-05" db="EMBL/GenBank/DDBJ databases">
        <title>Genome sequence of Clostridium botulinum Ba4 strain 657.</title>
        <authorList>
            <person name="Shrivastava S."/>
            <person name="Brown J.L."/>
            <person name="Bruce D."/>
            <person name="Detter C."/>
            <person name="Munk C."/>
            <person name="Smith L.A."/>
            <person name="Smith T.J."/>
            <person name="Sutton G."/>
            <person name="Brettin T.S."/>
        </authorList>
    </citation>
    <scope>NUCLEOTIDE SEQUENCE [LARGE SCALE GENOMIC DNA]</scope>
    <source>
        <strain>657 / Type Ba4</strain>
    </source>
</reference>